<gene>
    <name evidence="1" type="primary">infA</name>
    <name type="ordered locus">LSL_1413</name>
</gene>
<accession>Q1WSB2</accession>
<feature type="chain" id="PRO_0000263815" description="Translation initiation factor IF-1">
    <location>
        <begin position="1"/>
        <end position="72"/>
    </location>
</feature>
<feature type="domain" description="S1-like" evidence="1">
    <location>
        <begin position="1"/>
        <end position="72"/>
    </location>
</feature>
<sequence>MAKDDVIEIEGTIKETLPNAMFKVELENGHEILAHVSGKIRMHYIRILPGDKVTVEMSPYDLTKGRITYRFK</sequence>
<comment type="function">
    <text evidence="1">One of the essential components for the initiation of protein synthesis. Stabilizes the binding of IF-2 and IF-3 on the 30S subunit to which N-formylmethionyl-tRNA(fMet) subsequently binds. Helps modulate mRNA selection, yielding the 30S pre-initiation complex (PIC). Upon addition of the 50S ribosomal subunit IF-1, IF-2 and IF-3 are released leaving the mature 70S translation initiation complex.</text>
</comment>
<comment type="subunit">
    <text evidence="1">Component of the 30S ribosomal translation pre-initiation complex which assembles on the 30S ribosome in the order IF-2 and IF-3, IF-1 and N-formylmethionyl-tRNA(fMet); mRNA recruitment can occur at any time during PIC assembly.</text>
</comment>
<comment type="subcellular location">
    <subcellularLocation>
        <location evidence="1">Cytoplasm</location>
    </subcellularLocation>
</comment>
<comment type="similarity">
    <text evidence="1">Belongs to the IF-1 family.</text>
</comment>
<dbReference type="EMBL" id="CP000233">
    <property type="protein sequence ID" value="ABE00217.1"/>
    <property type="molecule type" value="Genomic_DNA"/>
</dbReference>
<dbReference type="RefSeq" id="WP_003689399.1">
    <property type="nucleotide sequence ID" value="NC_007929.1"/>
</dbReference>
<dbReference type="RefSeq" id="YP_536300.1">
    <property type="nucleotide sequence ID" value="NC_007929.1"/>
</dbReference>
<dbReference type="SMR" id="Q1WSB2"/>
<dbReference type="STRING" id="362948.LSL_1413"/>
<dbReference type="GeneID" id="98315526"/>
<dbReference type="KEGG" id="lsl:LSL_1413"/>
<dbReference type="PATRIC" id="fig|362948.14.peg.1496"/>
<dbReference type="HOGENOM" id="CLU_151267_1_0_9"/>
<dbReference type="OrthoDB" id="9803250at2"/>
<dbReference type="Proteomes" id="UP000006559">
    <property type="component" value="Chromosome"/>
</dbReference>
<dbReference type="GO" id="GO:0005829">
    <property type="term" value="C:cytosol"/>
    <property type="evidence" value="ECO:0007669"/>
    <property type="project" value="TreeGrafter"/>
</dbReference>
<dbReference type="GO" id="GO:0043022">
    <property type="term" value="F:ribosome binding"/>
    <property type="evidence" value="ECO:0007669"/>
    <property type="project" value="UniProtKB-UniRule"/>
</dbReference>
<dbReference type="GO" id="GO:0019843">
    <property type="term" value="F:rRNA binding"/>
    <property type="evidence" value="ECO:0007669"/>
    <property type="project" value="UniProtKB-UniRule"/>
</dbReference>
<dbReference type="GO" id="GO:0003743">
    <property type="term" value="F:translation initiation factor activity"/>
    <property type="evidence" value="ECO:0007669"/>
    <property type="project" value="UniProtKB-UniRule"/>
</dbReference>
<dbReference type="CDD" id="cd04451">
    <property type="entry name" value="S1_IF1"/>
    <property type="match status" value="1"/>
</dbReference>
<dbReference type="FunFam" id="2.40.50.140:FF:000002">
    <property type="entry name" value="Translation initiation factor IF-1"/>
    <property type="match status" value="1"/>
</dbReference>
<dbReference type="Gene3D" id="2.40.50.140">
    <property type="entry name" value="Nucleic acid-binding proteins"/>
    <property type="match status" value="1"/>
</dbReference>
<dbReference type="HAMAP" id="MF_00075">
    <property type="entry name" value="IF_1"/>
    <property type="match status" value="1"/>
</dbReference>
<dbReference type="InterPro" id="IPR012340">
    <property type="entry name" value="NA-bd_OB-fold"/>
</dbReference>
<dbReference type="InterPro" id="IPR006196">
    <property type="entry name" value="RNA-binding_domain_S1_IF1"/>
</dbReference>
<dbReference type="InterPro" id="IPR003029">
    <property type="entry name" value="S1_domain"/>
</dbReference>
<dbReference type="InterPro" id="IPR004368">
    <property type="entry name" value="TIF_IF1"/>
</dbReference>
<dbReference type="NCBIfam" id="TIGR00008">
    <property type="entry name" value="infA"/>
    <property type="match status" value="1"/>
</dbReference>
<dbReference type="PANTHER" id="PTHR33370">
    <property type="entry name" value="TRANSLATION INITIATION FACTOR IF-1, CHLOROPLASTIC"/>
    <property type="match status" value="1"/>
</dbReference>
<dbReference type="PANTHER" id="PTHR33370:SF1">
    <property type="entry name" value="TRANSLATION INITIATION FACTOR IF-1, CHLOROPLASTIC"/>
    <property type="match status" value="1"/>
</dbReference>
<dbReference type="Pfam" id="PF01176">
    <property type="entry name" value="eIF-1a"/>
    <property type="match status" value="1"/>
</dbReference>
<dbReference type="SMART" id="SM00316">
    <property type="entry name" value="S1"/>
    <property type="match status" value="1"/>
</dbReference>
<dbReference type="SUPFAM" id="SSF50249">
    <property type="entry name" value="Nucleic acid-binding proteins"/>
    <property type="match status" value="1"/>
</dbReference>
<dbReference type="PROSITE" id="PS50832">
    <property type="entry name" value="S1_IF1_TYPE"/>
    <property type="match status" value="1"/>
</dbReference>
<name>IF1_LIGS1</name>
<reference key="1">
    <citation type="journal article" date="2006" name="Proc. Natl. Acad. Sci. U.S.A.">
        <title>Multireplicon genome architecture of Lactobacillus salivarius.</title>
        <authorList>
            <person name="Claesson M.J."/>
            <person name="Li Y."/>
            <person name="Leahy S."/>
            <person name="Canchaya C."/>
            <person name="van Pijkeren J.P."/>
            <person name="Cerdeno-Tarraga A.M."/>
            <person name="Parkhill J."/>
            <person name="Flynn S."/>
            <person name="O'Sullivan G.C."/>
            <person name="Collins J.K."/>
            <person name="Higgins D."/>
            <person name="Shanahan F."/>
            <person name="Fitzgerald G.F."/>
            <person name="van Sinderen D."/>
            <person name="O'Toole P.W."/>
        </authorList>
    </citation>
    <scope>NUCLEOTIDE SEQUENCE [LARGE SCALE GENOMIC DNA]</scope>
    <source>
        <strain>UCC118</strain>
    </source>
</reference>
<protein>
    <recommendedName>
        <fullName evidence="1">Translation initiation factor IF-1</fullName>
    </recommendedName>
</protein>
<organism>
    <name type="scientific">Ligilactobacillus salivarius (strain UCC118)</name>
    <name type="common">Lactobacillus salivarius</name>
    <dbReference type="NCBI Taxonomy" id="362948"/>
    <lineage>
        <taxon>Bacteria</taxon>
        <taxon>Bacillati</taxon>
        <taxon>Bacillota</taxon>
        <taxon>Bacilli</taxon>
        <taxon>Lactobacillales</taxon>
        <taxon>Lactobacillaceae</taxon>
        <taxon>Ligilactobacillus</taxon>
    </lineage>
</organism>
<keyword id="KW-0963">Cytoplasm</keyword>
<keyword id="KW-0396">Initiation factor</keyword>
<keyword id="KW-0648">Protein biosynthesis</keyword>
<keyword id="KW-1185">Reference proteome</keyword>
<keyword id="KW-0694">RNA-binding</keyword>
<keyword id="KW-0699">rRNA-binding</keyword>
<evidence type="ECO:0000255" key="1">
    <source>
        <dbReference type="HAMAP-Rule" id="MF_00075"/>
    </source>
</evidence>
<proteinExistence type="inferred from homology"/>